<evidence type="ECO:0000255" key="1"/>
<evidence type="ECO:0000305" key="2"/>
<keyword id="KW-0472">Membrane</keyword>
<keyword id="KW-1267">Proteomics identification</keyword>
<keyword id="KW-1185">Reference proteome</keyword>
<keyword id="KW-0812">Transmembrane</keyword>
<keyword id="KW-1133">Transmembrane helix</keyword>
<name>TMM42_HUMAN</name>
<sequence>MAERPGPPGGAVSATAYPDTPAEFPPHLQAGAMRRRFWGVFNCLCAGAFGALAAASAKLAFGSEVSMGLCVLGIIVMASTNSLMWTFFSRGLSFSMSSAIASVTVTFSNILSSAFLGYVLYGECQEVLWWGGVFLILCGLTLIHRKLPPTWKPLPHKQQ</sequence>
<feature type="chain" id="PRO_0000284495" description="Transmembrane protein 42">
    <location>
        <begin position="1"/>
        <end position="159"/>
    </location>
</feature>
<feature type="transmembrane region" description="Helical" evidence="1">
    <location>
        <begin position="37"/>
        <end position="57"/>
    </location>
</feature>
<feature type="transmembrane region" description="Helical" evidence="1">
    <location>
        <begin position="59"/>
        <end position="79"/>
    </location>
</feature>
<feature type="transmembrane region" description="Helical" evidence="1">
    <location>
        <begin position="100"/>
        <end position="120"/>
    </location>
</feature>
<feature type="transmembrane region" description="Helical" evidence="1">
    <location>
        <begin position="124"/>
        <end position="144"/>
    </location>
</feature>
<feature type="sequence conflict" description="In Ref. 1; CAH10689." evidence="2" ref="1">
    <original>V</original>
    <variation>VV</variation>
    <location>
        <position position="65"/>
    </location>
</feature>
<organism>
    <name type="scientific">Homo sapiens</name>
    <name type="common">Human</name>
    <dbReference type="NCBI Taxonomy" id="9606"/>
    <lineage>
        <taxon>Eukaryota</taxon>
        <taxon>Metazoa</taxon>
        <taxon>Chordata</taxon>
        <taxon>Craniata</taxon>
        <taxon>Vertebrata</taxon>
        <taxon>Euteleostomi</taxon>
        <taxon>Mammalia</taxon>
        <taxon>Eutheria</taxon>
        <taxon>Euarchontoglires</taxon>
        <taxon>Primates</taxon>
        <taxon>Haplorrhini</taxon>
        <taxon>Catarrhini</taxon>
        <taxon>Hominidae</taxon>
        <taxon>Homo</taxon>
    </lineage>
</organism>
<dbReference type="EMBL" id="AL834253">
    <property type="protein sequence ID" value="CAH10689.1"/>
    <property type="molecule type" value="mRNA"/>
</dbReference>
<dbReference type="EMBL" id="BC019851">
    <property type="protein sequence ID" value="AAH19851.1"/>
    <property type="molecule type" value="mRNA"/>
</dbReference>
<dbReference type="CCDS" id="CCDS2722.1"/>
<dbReference type="RefSeq" id="NP_653239.1">
    <property type="nucleotide sequence ID" value="NM_144638.3"/>
</dbReference>
<dbReference type="BioGRID" id="126290">
    <property type="interactions" value="57"/>
</dbReference>
<dbReference type="FunCoup" id="Q69YG0">
    <property type="interactions" value="42"/>
</dbReference>
<dbReference type="IntAct" id="Q69YG0">
    <property type="interactions" value="49"/>
</dbReference>
<dbReference type="MINT" id="Q69YG0"/>
<dbReference type="STRING" id="9606.ENSP00000306564"/>
<dbReference type="iPTMnet" id="Q69YG0"/>
<dbReference type="PhosphoSitePlus" id="Q69YG0"/>
<dbReference type="BioMuta" id="TMEM42"/>
<dbReference type="DMDM" id="145572734"/>
<dbReference type="MassIVE" id="Q69YG0"/>
<dbReference type="PaxDb" id="9606-ENSP00000306564"/>
<dbReference type="PeptideAtlas" id="Q69YG0"/>
<dbReference type="ProteomicsDB" id="66153"/>
<dbReference type="Antibodypedia" id="29508">
    <property type="antibodies" value="29 antibodies from 12 providers"/>
</dbReference>
<dbReference type="DNASU" id="131616"/>
<dbReference type="Ensembl" id="ENST00000302392.5">
    <property type="protein sequence ID" value="ENSP00000306564.4"/>
    <property type="gene ID" value="ENSG00000169964.8"/>
</dbReference>
<dbReference type="Ensembl" id="ENST00000626748.2">
    <property type="protein sequence ID" value="ENSP00000486141.1"/>
    <property type="gene ID" value="ENSG00000280516.4"/>
</dbReference>
<dbReference type="GeneID" id="131616"/>
<dbReference type="KEGG" id="hsa:131616"/>
<dbReference type="MANE-Select" id="ENST00000302392.5">
    <property type="protein sequence ID" value="ENSP00000306564.4"/>
    <property type="RefSeq nucleotide sequence ID" value="NM_144638.3"/>
    <property type="RefSeq protein sequence ID" value="NP_653239.1"/>
</dbReference>
<dbReference type="UCSC" id="uc003cnz.4">
    <property type="organism name" value="human"/>
</dbReference>
<dbReference type="AGR" id="HGNC:28444"/>
<dbReference type="CTD" id="131616"/>
<dbReference type="GeneCards" id="TMEM42"/>
<dbReference type="HGNC" id="HGNC:28444">
    <property type="gene designation" value="TMEM42"/>
</dbReference>
<dbReference type="HPA" id="ENSG00000169964">
    <property type="expression patterns" value="Low tissue specificity"/>
</dbReference>
<dbReference type="neXtProt" id="NX_Q69YG0"/>
<dbReference type="OpenTargets" id="ENSG00000169964"/>
<dbReference type="PharmGKB" id="PA134914008"/>
<dbReference type="VEuPathDB" id="HostDB:ENSG00000169964"/>
<dbReference type="eggNOG" id="ENOG502RY7R">
    <property type="taxonomic scope" value="Eukaryota"/>
</dbReference>
<dbReference type="GeneTree" id="ENSGT00390000012690"/>
<dbReference type="HOGENOM" id="CLU_076687_2_0_1"/>
<dbReference type="InParanoid" id="Q69YG0"/>
<dbReference type="OMA" id="QIALWWV"/>
<dbReference type="OrthoDB" id="5854584at2759"/>
<dbReference type="PAN-GO" id="Q69YG0">
    <property type="GO annotations" value="0 GO annotations based on evolutionary models"/>
</dbReference>
<dbReference type="PhylomeDB" id="Q69YG0"/>
<dbReference type="TreeFam" id="TF336306"/>
<dbReference type="PathwayCommons" id="Q69YG0"/>
<dbReference type="SignaLink" id="Q69YG0"/>
<dbReference type="BioGRID-ORCS" id="131616">
    <property type="hits" value="15 hits in 1152 CRISPR screens"/>
</dbReference>
<dbReference type="ChiTaRS" id="TMEM42">
    <property type="organism name" value="human"/>
</dbReference>
<dbReference type="GenomeRNAi" id="131616"/>
<dbReference type="Pharos" id="Q69YG0">
    <property type="development level" value="Tdark"/>
</dbReference>
<dbReference type="PRO" id="PR:Q69YG0"/>
<dbReference type="Proteomes" id="UP000005640">
    <property type="component" value="Chromosome 3"/>
</dbReference>
<dbReference type="RNAct" id="Q69YG0">
    <property type="molecule type" value="protein"/>
</dbReference>
<dbReference type="Bgee" id="ENSG00000169964">
    <property type="expression patterns" value="Expressed in C1 segment of cervical spinal cord and 97 other cell types or tissues"/>
</dbReference>
<dbReference type="GO" id="GO:0016020">
    <property type="term" value="C:membrane"/>
    <property type="evidence" value="ECO:0007669"/>
    <property type="project" value="UniProtKB-SubCell"/>
</dbReference>
<dbReference type="InterPro" id="IPR039632">
    <property type="entry name" value="TMEM42"/>
</dbReference>
<dbReference type="PANTHER" id="PTHR31965">
    <property type="entry name" value="TRANSMEMBRANE PROTEIN 42"/>
    <property type="match status" value="1"/>
</dbReference>
<dbReference type="PANTHER" id="PTHR31965:SF1">
    <property type="entry name" value="TRANSMEMBRANE PROTEIN 42"/>
    <property type="match status" value="1"/>
</dbReference>
<dbReference type="SUPFAM" id="SSF103481">
    <property type="entry name" value="Multidrug resistance efflux transporter EmrE"/>
    <property type="match status" value="1"/>
</dbReference>
<gene>
    <name type="primary">TMEM42</name>
</gene>
<comment type="interaction">
    <interactant intactId="EBI-12038591">
        <id>Q69YG0</id>
    </interactant>
    <interactant intactId="EBI-2808854">
        <id>Q92482</id>
        <label>AQP3</label>
    </interactant>
    <organismsDiffer>false</organismsDiffer>
    <experiments>3</experiments>
</comment>
<comment type="interaction">
    <interactant intactId="EBI-12038591">
        <id>Q69YG0</id>
    </interactant>
    <interactant intactId="EBI-13059134">
        <id>Q13520</id>
        <label>AQP6</label>
    </interactant>
    <organismsDiffer>false</organismsDiffer>
    <experiments>3</experiments>
</comment>
<comment type="interaction">
    <interactant intactId="EBI-12038591">
        <id>Q69YG0</id>
    </interactant>
    <interactant intactId="EBI-7797864">
        <id>P11912</id>
        <label>CD79A</label>
    </interactant>
    <organismsDiffer>false</organismsDiffer>
    <experiments>3</experiments>
</comment>
<comment type="interaction">
    <interactant intactId="EBI-12038591">
        <id>Q69YG0</id>
    </interactant>
    <interactant intactId="EBI-740376">
        <id>Q86UW9</id>
        <label>DTX2</label>
    </interactant>
    <organismsDiffer>false</organismsDiffer>
    <experiments>3</experiments>
</comment>
<comment type="interaction">
    <interactant intactId="EBI-12038591">
        <id>Q69YG0</id>
    </interactant>
    <interactant intactId="EBI-3915253">
        <id>Q15125</id>
        <label>EBP</label>
    </interactant>
    <organismsDiffer>false</organismsDiffer>
    <experiments>3</experiments>
</comment>
<comment type="interaction">
    <interactant intactId="EBI-12038591">
        <id>Q69YG0</id>
    </interactant>
    <interactant intactId="EBI-529425">
        <id>Q92838</id>
        <label>EDA</label>
    </interactant>
    <organismsDiffer>false</organismsDiffer>
    <experiments>3</experiments>
</comment>
<comment type="interaction">
    <interactant intactId="EBI-12038591">
        <id>Q69YG0</id>
    </interactant>
    <interactant intactId="EBI-18535450">
        <id>Q9GZR5</id>
        <label>ELOVL4</label>
    </interactant>
    <organismsDiffer>false</organismsDiffer>
    <experiments>3</experiments>
</comment>
<comment type="interaction">
    <interactant intactId="EBI-12038591">
        <id>Q69YG0</id>
    </interactant>
    <interactant intactId="EBI-781551">
        <id>Q9Y282</id>
        <label>ERGIC3</label>
    </interactant>
    <organismsDiffer>false</organismsDiffer>
    <experiments>3</experiments>
</comment>
<comment type="interaction">
    <interactant intactId="EBI-12038591">
        <id>Q69YG0</id>
    </interactant>
    <interactant intactId="EBI-18636064">
        <id>Q8TBP5</id>
        <label>FAM174A</label>
    </interactant>
    <organismsDiffer>false</organismsDiffer>
    <experiments>3</experiments>
</comment>
<comment type="interaction">
    <interactant intactId="EBI-12038591">
        <id>Q69YG0</id>
    </interactant>
    <interactant intactId="EBI-18304435">
        <id>Q5JX71</id>
        <label>FAM209A</label>
    </interactant>
    <organismsDiffer>false</organismsDiffer>
    <experiments>3</experiments>
</comment>
<comment type="interaction">
    <interactant intactId="EBI-12038591">
        <id>Q69YG0</id>
    </interactant>
    <interactant intactId="EBI-18908258">
        <id>O00258</id>
        <label>GET1</label>
    </interactant>
    <organismsDiffer>false</organismsDiffer>
    <experiments>3</experiments>
</comment>
<comment type="interaction">
    <interactant intactId="EBI-12038591">
        <id>Q69YG0</id>
    </interactant>
    <interactant intactId="EBI-17458373">
        <id>P48165</id>
        <label>GJA8</label>
    </interactant>
    <organismsDiffer>false</organismsDiffer>
    <experiments>3</experiments>
</comment>
<comment type="interaction">
    <interactant intactId="EBI-12038591">
        <id>Q69YG0</id>
    </interactant>
    <interactant intactId="EBI-13345167">
        <id>Q8TDT2</id>
        <label>GPR152</label>
    </interactant>
    <organismsDiffer>false</organismsDiffer>
    <experiments>3</experiments>
</comment>
<comment type="interaction">
    <interactant intactId="EBI-12038591">
        <id>Q69YG0</id>
    </interactant>
    <interactant intactId="EBI-11721746">
        <id>Q8TED1</id>
        <label>GPX8</label>
    </interactant>
    <organismsDiffer>false</organismsDiffer>
    <experiments>3</experiments>
</comment>
<comment type="interaction">
    <interactant intactId="EBI-12038591">
        <id>Q69YG0</id>
    </interactant>
    <interactant intactId="EBI-1052304">
        <id>Q8NBQ5</id>
        <label>HSD17B11</label>
    </interactant>
    <organismsDiffer>false</organismsDiffer>
    <experiments>3</experiments>
</comment>
<comment type="interaction">
    <interactant intactId="EBI-12038591">
        <id>Q69YG0</id>
    </interactant>
    <interactant intactId="EBI-18053395">
        <id>Q7Z5P4</id>
        <label>HSD17B13</label>
    </interactant>
    <organismsDiffer>false</organismsDiffer>
    <experiments>3</experiments>
</comment>
<comment type="interaction">
    <interactant intactId="EBI-12038591">
        <id>Q69YG0</id>
    </interactant>
    <interactant intactId="EBI-750776">
        <id>O95214</id>
        <label>LEPROTL1</label>
    </interactant>
    <organismsDiffer>false</organismsDiffer>
    <experiments>3</experiments>
</comment>
<comment type="interaction">
    <interactant intactId="EBI-12038591">
        <id>Q69YG0</id>
    </interactant>
    <interactant intactId="EBI-2820517">
        <id>Q8TAF8</id>
        <label>LHFPL5</label>
    </interactant>
    <organismsDiffer>false</organismsDiffer>
    <experiments>3</experiments>
</comment>
<comment type="interaction">
    <interactant intactId="EBI-12038591">
        <id>Q69YG0</id>
    </interactant>
    <interactant intactId="EBI-11956541">
        <id>Q9GZY8-5</id>
        <label>MFF</label>
    </interactant>
    <organismsDiffer>false</organismsDiffer>
    <experiments>3</experiments>
</comment>
<comment type="interaction">
    <interactant intactId="EBI-12038591">
        <id>Q69YG0</id>
    </interactant>
    <interactant intactId="EBI-17873222">
        <id>Q15546</id>
        <label>MMD</label>
    </interactant>
    <organismsDiffer>false</organismsDiffer>
    <experiments>3</experiments>
</comment>
<comment type="interaction">
    <interactant intactId="EBI-12038591">
        <id>Q69YG0</id>
    </interactant>
    <interactant intactId="EBI-6163737">
        <id>Q8N4V1</id>
        <label>MMGT1</label>
    </interactant>
    <organismsDiffer>false</organismsDiffer>
    <experiments>3</experiments>
</comment>
<comment type="interaction">
    <interactant intactId="EBI-12038591">
        <id>Q69YG0</id>
    </interactant>
    <interactant intactId="EBI-5454865">
        <id>Q6IN84</id>
        <label>MRM1</label>
    </interactant>
    <organismsDiffer>false</organismsDiffer>
    <experiments>3</experiments>
</comment>
<comment type="interaction">
    <interactant intactId="EBI-12038591">
        <id>Q69YG0</id>
    </interactant>
    <interactant intactId="EBI-3923617">
        <id>Q9H2K0</id>
        <label>MTIF3</label>
    </interactant>
    <organismsDiffer>false</organismsDiffer>
    <experiments>3</experiments>
</comment>
<comment type="interaction">
    <interactant intactId="EBI-12038591">
        <id>Q69YG0</id>
    </interactant>
    <interactant intactId="EBI-10969203">
        <id>O14524-2</id>
        <label>NEMP1</label>
    </interactant>
    <organismsDiffer>false</organismsDiffer>
    <experiments>3</experiments>
</comment>
<comment type="interaction">
    <interactant intactId="EBI-12038591">
        <id>Q69YG0</id>
    </interactant>
    <interactant intactId="EBI-9027467">
        <id>O75360</id>
        <label>PROP1</label>
    </interactant>
    <organismsDiffer>false</organismsDiffer>
    <experiments>3</experiments>
</comment>
<comment type="interaction">
    <interactant intactId="EBI-12038591">
        <id>Q69YG0</id>
    </interactant>
    <interactant intactId="EBI-712367">
        <id>Q9UI14</id>
        <label>RABAC1</label>
    </interactant>
    <organismsDiffer>false</organismsDiffer>
    <experiments>3</experiments>
</comment>
<comment type="interaction">
    <interactant intactId="EBI-12038591">
        <id>Q69YG0</id>
    </interactant>
    <interactant intactId="EBI-740343">
        <id>Q93062-3</id>
        <label>RBPMS</label>
    </interactant>
    <organismsDiffer>false</organismsDiffer>
    <experiments>3</experiments>
</comment>
<comment type="interaction">
    <interactant intactId="EBI-12038591">
        <id>Q69YG0</id>
    </interactant>
    <interactant intactId="EBI-1644241">
        <id>Q9H902</id>
        <label>REEP1</label>
    </interactant>
    <organismsDiffer>false</organismsDiffer>
    <experiments>3</experiments>
</comment>
<comment type="interaction">
    <interactant intactId="EBI-12038591">
        <id>Q69YG0</id>
    </interactant>
    <interactant intactId="EBI-11337973">
        <id>Q9BRK0</id>
        <label>REEP2</label>
    </interactant>
    <organismsDiffer>false</organismsDiffer>
    <experiments>3</experiments>
</comment>
<comment type="interaction">
    <interactant intactId="EBI-12038591">
        <id>Q69YG0</id>
    </interactant>
    <interactant intactId="EBI-10192441">
        <id>Q86VR2</id>
        <label>RETREG3</label>
    </interactant>
    <organismsDiffer>false</organismsDiffer>
    <experiments>3</experiments>
</comment>
<comment type="interaction">
    <interactant intactId="EBI-12038591">
        <id>Q69YG0</id>
    </interactant>
    <interactant intactId="EBI-9916444">
        <id>Q8TEB9</id>
        <label>RHBDD1</label>
    </interactant>
    <organismsDiffer>false</organismsDiffer>
    <experiments>3</experiments>
</comment>
<comment type="interaction">
    <interactant intactId="EBI-12038591">
        <id>Q69YG0</id>
    </interactant>
    <interactant intactId="EBI-3920694">
        <id>Q9NR31</id>
        <label>SAR1A</label>
    </interactant>
    <organismsDiffer>false</organismsDiffer>
    <experiments>3</experiments>
</comment>
<comment type="interaction">
    <interactant intactId="EBI-12038591">
        <id>Q69YG0</id>
    </interactant>
    <interactant intactId="EBI-17247926">
        <id>Q9NY72</id>
        <label>SCN3B</label>
    </interactant>
    <organismsDiffer>false</organismsDiffer>
    <experiments>3</experiments>
</comment>
<comment type="interaction">
    <interactant intactId="EBI-12038591">
        <id>Q69YG0</id>
    </interactant>
    <interactant intactId="EBI-2855401">
        <id>Q9BY50</id>
        <label>SEC11C</label>
    </interactant>
    <organismsDiffer>false</organismsDiffer>
    <experiments>3</experiments>
</comment>
<comment type="interaction">
    <interactant intactId="EBI-12038591">
        <id>Q69YG0</id>
    </interactant>
    <interactant intactId="EBI-18037857">
        <id>Q3SXP7</id>
        <label>SHISAL1</label>
    </interactant>
    <organismsDiffer>false</organismsDiffer>
    <experiments>3</experiments>
</comment>
<comment type="interaction">
    <interactant intactId="EBI-12038591">
        <id>Q69YG0</id>
    </interactant>
    <interactant intactId="EBI-17595455">
        <id>P54219-3</id>
        <label>SLC18A1</label>
    </interactant>
    <organismsDiffer>false</organismsDiffer>
    <experiments>3</experiments>
</comment>
<comment type="interaction">
    <interactant intactId="EBI-12038591">
        <id>Q69YG0</id>
    </interactant>
    <interactant intactId="EBI-12811757">
        <id>O95436-2</id>
        <label>SLC34A2</label>
    </interactant>
    <organismsDiffer>false</organismsDiffer>
    <experiments>3</experiments>
</comment>
<comment type="interaction">
    <interactant intactId="EBI-12038591">
        <id>Q69YG0</id>
    </interactant>
    <interactant intactId="EBI-373430">
        <id>Q96QK8</id>
        <label>SMIM14</label>
    </interactant>
    <organismsDiffer>false</organismsDiffer>
    <experiments>3</experiments>
</comment>
<comment type="interaction">
    <interactant intactId="EBI-12038591">
        <id>Q69YG0</id>
    </interactant>
    <interactant intactId="EBI-23750686">
        <id>Q8N434-2</id>
        <label>SVOPL</label>
    </interactant>
    <organismsDiffer>false</organismsDiffer>
    <experiments>3</experiments>
</comment>
<comment type="interaction">
    <interactant intactId="EBI-12038591">
        <id>Q69YG0</id>
    </interactant>
    <interactant intactId="EBI-3939165">
        <id>O43711</id>
        <label>TLX3</label>
    </interactant>
    <organismsDiffer>false</organismsDiffer>
    <experiments>3</experiments>
</comment>
<comment type="interaction">
    <interactant intactId="EBI-12038591">
        <id>Q69YG0</id>
    </interactant>
    <interactant intactId="EBI-6448756">
        <id>Q96DZ7</id>
        <label>TM4SF19</label>
    </interactant>
    <organismsDiffer>false</organismsDiffer>
    <experiments>3</experiments>
</comment>
<comment type="interaction">
    <interactant intactId="EBI-12038591">
        <id>Q69YG0</id>
    </interactant>
    <interactant intactId="EBI-348587">
        <id>Q9BVK8</id>
        <label>TMEM147</label>
    </interactant>
    <organismsDiffer>false</organismsDiffer>
    <experiments>3</experiments>
</comment>
<comment type="interaction">
    <interactant intactId="EBI-12038591">
        <id>Q69YG0</id>
    </interactant>
    <interactant intactId="EBI-8638294">
        <id>Q9NUH8</id>
        <label>TMEM14B</label>
    </interactant>
    <organismsDiffer>false</organismsDiffer>
    <experiments>3</experiments>
</comment>
<comment type="interaction">
    <interactant intactId="EBI-12038591">
        <id>Q69YG0</id>
    </interactant>
    <interactant intactId="EBI-10982110">
        <id>Q96Q45-2</id>
        <label>TMEM237</label>
    </interactant>
    <organismsDiffer>false</organismsDiffer>
    <experiments>3</experiments>
</comment>
<comment type="interaction">
    <interactant intactId="EBI-12038591">
        <id>Q69YG0</id>
    </interactant>
    <interactant intactId="EBI-11722971">
        <id>Q53FP2</id>
        <label>TMEM35A</label>
    </interactant>
    <organismsDiffer>false</organismsDiffer>
    <experiments>3</experiments>
</comment>
<comment type="interaction">
    <interactant intactId="EBI-12038591">
        <id>Q69YG0</id>
    </interactant>
    <interactant intactId="EBI-10292091">
        <id>Q96NL1</id>
        <label>TMEM74</label>
    </interactant>
    <organismsDiffer>false</organismsDiffer>
    <experiments>3</experiments>
</comment>
<comment type="interaction">
    <interactant intactId="EBI-12038591">
        <id>Q69YG0</id>
    </interactant>
    <interactant intactId="EBI-10191303">
        <id>O95231</id>
        <label>VENTX</label>
    </interactant>
    <organismsDiffer>false</organismsDiffer>
    <experiments>3</experiments>
</comment>
<comment type="interaction">
    <interactant intactId="EBI-12038591">
        <id>Q69YG0</id>
    </interactant>
    <interactant intactId="EBI-12837904">
        <id>Q96MV8</id>
        <label>ZDHHC15</label>
    </interactant>
    <organismsDiffer>false</organismsDiffer>
    <experiments>3</experiments>
</comment>
<comment type="subcellular location">
    <subcellularLocation>
        <location evidence="2">Membrane</location>
        <topology evidence="2">Multi-pass membrane protein</topology>
    </subcellularLocation>
</comment>
<reference key="1">
    <citation type="journal article" date="2007" name="BMC Genomics">
        <title>The full-ORF clone resource of the German cDNA consortium.</title>
        <authorList>
            <person name="Bechtel S."/>
            <person name="Rosenfelder H."/>
            <person name="Duda A."/>
            <person name="Schmidt C.P."/>
            <person name="Ernst U."/>
            <person name="Wellenreuther R."/>
            <person name="Mehrle A."/>
            <person name="Schuster C."/>
            <person name="Bahr A."/>
            <person name="Bloecker H."/>
            <person name="Heubner D."/>
            <person name="Hoerlein A."/>
            <person name="Michel G."/>
            <person name="Wedler H."/>
            <person name="Koehrer K."/>
            <person name="Ottenwaelder B."/>
            <person name="Poustka A."/>
            <person name="Wiemann S."/>
            <person name="Schupp I."/>
        </authorList>
    </citation>
    <scope>NUCLEOTIDE SEQUENCE [LARGE SCALE MRNA]</scope>
    <source>
        <tissue>Testis</tissue>
    </source>
</reference>
<reference key="2">
    <citation type="journal article" date="2004" name="Genome Res.">
        <title>The status, quality, and expansion of the NIH full-length cDNA project: the Mammalian Gene Collection (MGC).</title>
        <authorList>
            <consortium name="The MGC Project Team"/>
        </authorList>
    </citation>
    <scope>NUCLEOTIDE SEQUENCE [LARGE SCALE MRNA]</scope>
    <source>
        <tissue>Cervix</tissue>
    </source>
</reference>
<proteinExistence type="evidence at protein level"/>
<accession>Q69YG0</accession>
<accession>Q8WUQ6</accession>
<protein>
    <recommendedName>
        <fullName>Transmembrane protein 42</fullName>
    </recommendedName>
</protein>